<evidence type="ECO:0000250" key="1"/>
<evidence type="ECO:0000250" key="2">
    <source>
        <dbReference type="UniProtKB" id="P68425"/>
    </source>
</evidence>
<evidence type="ECO:0000255" key="3"/>
<evidence type="ECO:0000255" key="4">
    <source>
        <dbReference type="PROSITE-ProRule" id="PRU00031"/>
    </source>
</evidence>
<evidence type="ECO:0000303" key="5">
    <source>
    </source>
</evidence>
<evidence type="ECO:0000305" key="6"/>
<evidence type="ECO:0000305" key="7">
    <source>
    </source>
</evidence>
<dbReference type="SMR" id="P0DJ72"/>
<dbReference type="ArachnoServer" id="AS001944">
    <property type="toxin name" value="U15-theraphotoxin-Hhn1e"/>
</dbReference>
<dbReference type="GO" id="GO:0005576">
    <property type="term" value="C:extracellular region"/>
    <property type="evidence" value="ECO:0007669"/>
    <property type="project" value="UniProtKB-SubCell"/>
</dbReference>
<dbReference type="GO" id="GO:0015459">
    <property type="term" value="F:potassium channel regulator activity"/>
    <property type="evidence" value="ECO:0007669"/>
    <property type="project" value="UniProtKB-KW"/>
</dbReference>
<dbReference type="GO" id="GO:0004867">
    <property type="term" value="F:serine-type endopeptidase inhibitor activity"/>
    <property type="evidence" value="ECO:0007669"/>
    <property type="project" value="UniProtKB-KW"/>
</dbReference>
<dbReference type="GO" id="GO:0090729">
    <property type="term" value="F:toxin activity"/>
    <property type="evidence" value="ECO:0007669"/>
    <property type="project" value="UniProtKB-KW"/>
</dbReference>
<dbReference type="GO" id="GO:0044562">
    <property type="term" value="P:envenomation resulting in negative regulation of voltage-gated potassium channel activity in another organism"/>
    <property type="evidence" value="ECO:0007669"/>
    <property type="project" value="UniProtKB-ARBA"/>
</dbReference>
<dbReference type="CDD" id="cd22598">
    <property type="entry name" value="Kunitz_huwentoxin"/>
    <property type="match status" value="1"/>
</dbReference>
<dbReference type="FunFam" id="4.10.410.10:FF:000020">
    <property type="entry name" value="Collagen, type VI, alpha 3"/>
    <property type="match status" value="1"/>
</dbReference>
<dbReference type="Gene3D" id="4.10.410.10">
    <property type="entry name" value="Pancreatic trypsin inhibitor Kunitz domain"/>
    <property type="match status" value="1"/>
</dbReference>
<dbReference type="InterPro" id="IPR002223">
    <property type="entry name" value="Kunitz_BPTI"/>
</dbReference>
<dbReference type="InterPro" id="IPR036880">
    <property type="entry name" value="Kunitz_BPTI_sf"/>
</dbReference>
<dbReference type="InterPro" id="IPR051388">
    <property type="entry name" value="Serpin_venom_toxin"/>
</dbReference>
<dbReference type="PANTHER" id="PTHR46751">
    <property type="entry name" value="EPPIN"/>
    <property type="match status" value="1"/>
</dbReference>
<dbReference type="PANTHER" id="PTHR46751:SF1">
    <property type="entry name" value="WAP FOUR-DISULFIDE CORE DOMAIN PROTEIN 6A"/>
    <property type="match status" value="1"/>
</dbReference>
<dbReference type="Pfam" id="PF00014">
    <property type="entry name" value="Kunitz_BPTI"/>
    <property type="match status" value="1"/>
</dbReference>
<dbReference type="PRINTS" id="PR00759">
    <property type="entry name" value="BASICPTASE"/>
</dbReference>
<dbReference type="SMART" id="SM00131">
    <property type="entry name" value="KU"/>
    <property type="match status" value="1"/>
</dbReference>
<dbReference type="SUPFAM" id="SSF57362">
    <property type="entry name" value="BPTI-like"/>
    <property type="match status" value="1"/>
</dbReference>
<dbReference type="PROSITE" id="PS50279">
    <property type="entry name" value="BPTI_KUNITZ_2"/>
    <property type="match status" value="1"/>
</dbReference>
<name>VKT68_CYRHA</name>
<accession>P0DJ72</accession>
<sequence>MGTARFLRAVLLLSVLLMVTFPALLSAEHHDGRVDICRLPSDSGDCLRFFEMWYFDGTTCTKFVYGGYGGNDNRFPTKKACMKRCAKA</sequence>
<organism>
    <name type="scientific">Cyriopagopus hainanus</name>
    <name type="common">Chinese bird spider</name>
    <name type="synonym">Haplopelma hainanum</name>
    <dbReference type="NCBI Taxonomy" id="209901"/>
    <lineage>
        <taxon>Eukaryota</taxon>
        <taxon>Metazoa</taxon>
        <taxon>Ecdysozoa</taxon>
        <taxon>Arthropoda</taxon>
        <taxon>Chelicerata</taxon>
        <taxon>Arachnida</taxon>
        <taxon>Araneae</taxon>
        <taxon>Mygalomorphae</taxon>
        <taxon>Theraphosidae</taxon>
        <taxon>Haplopelma</taxon>
    </lineage>
</organism>
<comment type="function">
    <text evidence="2">Serine protease inhibitor that inhibits trypsin at a molar ratio of 1:1.</text>
</comment>
<comment type="subcellular location">
    <subcellularLocation>
        <location evidence="7">Secreted</location>
    </subcellularLocation>
</comment>
<comment type="tissue specificity">
    <text evidence="7">Expressed by the venom gland.</text>
</comment>
<comment type="similarity">
    <text evidence="6">Belongs to the venom Kunitz-type family. 03 (sub-Kunitz) subfamily.</text>
</comment>
<protein>
    <recommendedName>
        <fullName>Kunitz-type U15-theraphotoxin-Hhn1e</fullName>
        <shortName>U15-TRTX-Hhn1e</shortName>
    </recommendedName>
    <alternativeName>
        <fullName evidence="5">Kunitz-type serine protease inhibitor HNTX-0314968</fullName>
    </alternativeName>
</protein>
<proteinExistence type="inferred from homology"/>
<keyword id="KW-1015">Disulfide bond</keyword>
<keyword id="KW-0646">Protease inhibitor</keyword>
<keyword id="KW-0964">Secreted</keyword>
<keyword id="KW-0722">Serine protease inhibitor</keyword>
<keyword id="KW-0732">Signal</keyword>
<feature type="signal peptide" evidence="3">
    <location>
        <begin position="1"/>
        <end position="27"/>
    </location>
</feature>
<feature type="propeptide" id="PRO_0000413819" evidence="1">
    <location>
        <begin position="28"/>
        <end position="33"/>
    </location>
</feature>
<feature type="chain" id="PRO_0000413820" description="Kunitz-type U15-theraphotoxin-Hhn1e">
    <location>
        <begin position="34"/>
        <end position="88"/>
    </location>
</feature>
<feature type="domain" description="BPTI/Kunitz inhibitor" evidence="4">
    <location>
        <begin position="37"/>
        <end position="85"/>
    </location>
</feature>
<feature type="site" description="May bind Kv1" evidence="1">
    <location>
        <position position="39"/>
    </location>
</feature>
<feature type="site" description="Reactive bond for chymotrypsin" evidence="1">
    <location>
        <begin position="47"/>
        <end position="48"/>
    </location>
</feature>
<feature type="disulfide bond" evidence="4">
    <location>
        <begin position="37"/>
        <end position="85"/>
    </location>
</feature>
<feature type="disulfide bond" evidence="4">
    <location>
        <begin position="60"/>
        <end position="81"/>
    </location>
</feature>
<reference key="1">
    <citation type="journal article" date="2008" name="PLoS ONE">
        <title>Discovery of a distinct superfamily of Kunitz-type toxin (KTT) from tarantulas.</title>
        <authorList>
            <person name="Yuan C.-H."/>
            <person name="He Q.-Y."/>
            <person name="Peng K."/>
            <person name="Diao J.-B."/>
            <person name="Jiang L.-P."/>
            <person name="Tang X."/>
            <person name="Liang S.-P."/>
        </authorList>
    </citation>
    <scope>NUCLEOTIDE SEQUENCE [MRNA]</scope>
    <source>
        <tissue>Venom gland</tissue>
    </source>
</reference>